<dbReference type="EMBL" id="CP001172">
    <property type="protein sequence ID" value="ACJ57189.1"/>
    <property type="molecule type" value="Genomic_DNA"/>
</dbReference>
<dbReference type="RefSeq" id="WP_000048256.1">
    <property type="nucleotide sequence ID" value="NZ_CP001172.1"/>
</dbReference>
<dbReference type="SMR" id="B7H0Q4"/>
<dbReference type="GeneID" id="97177253"/>
<dbReference type="HOGENOM" id="CLU_064548_3_1_6"/>
<dbReference type="Proteomes" id="UP000006924">
    <property type="component" value="Chromosome"/>
</dbReference>
<dbReference type="GO" id="GO:0022625">
    <property type="term" value="C:cytosolic large ribosomal subunit"/>
    <property type="evidence" value="ECO:0007669"/>
    <property type="project" value="TreeGrafter"/>
</dbReference>
<dbReference type="GO" id="GO:0003735">
    <property type="term" value="F:structural constituent of ribosome"/>
    <property type="evidence" value="ECO:0007669"/>
    <property type="project" value="InterPro"/>
</dbReference>
<dbReference type="GO" id="GO:0006412">
    <property type="term" value="P:translation"/>
    <property type="evidence" value="ECO:0007669"/>
    <property type="project" value="UniProtKB-UniRule"/>
</dbReference>
<dbReference type="FunFam" id="2.30.170.40:FF:000001">
    <property type="entry name" value="50S ribosomal protein L28"/>
    <property type="match status" value="1"/>
</dbReference>
<dbReference type="Gene3D" id="2.30.170.40">
    <property type="entry name" value="Ribosomal protein L28/L24"/>
    <property type="match status" value="1"/>
</dbReference>
<dbReference type="HAMAP" id="MF_00373">
    <property type="entry name" value="Ribosomal_bL28"/>
    <property type="match status" value="1"/>
</dbReference>
<dbReference type="InterPro" id="IPR026569">
    <property type="entry name" value="Ribosomal_bL28"/>
</dbReference>
<dbReference type="InterPro" id="IPR034704">
    <property type="entry name" value="Ribosomal_bL28/bL31-like_sf"/>
</dbReference>
<dbReference type="InterPro" id="IPR001383">
    <property type="entry name" value="Ribosomal_bL28_bact-type"/>
</dbReference>
<dbReference type="InterPro" id="IPR037147">
    <property type="entry name" value="Ribosomal_bL28_sf"/>
</dbReference>
<dbReference type="NCBIfam" id="TIGR00009">
    <property type="entry name" value="L28"/>
    <property type="match status" value="1"/>
</dbReference>
<dbReference type="PANTHER" id="PTHR13528">
    <property type="entry name" value="39S RIBOSOMAL PROTEIN L28, MITOCHONDRIAL"/>
    <property type="match status" value="1"/>
</dbReference>
<dbReference type="PANTHER" id="PTHR13528:SF2">
    <property type="entry name" value="LARGE RIBOSOMAL SUBUNIT PROTEIN BL28M"/>
    <property type="match status" value="1"/>
</dbReference>
<dbReference type="Pfam" id="PF00830">
    <property type="entry name" value="Ribosomal_L28"/>
    <property type="match status" value="1"/>
</dbReference>
<dbReference type="SUPFAM" id="SSF143800">
    <property type="entry name" value="L28p-like"/>
    <property type="match status" value="1"/>
</dbReference>
<name>RL28_ACIB3</name>
<sequence length="78" mass="9104">MSKVCQVTGKRPVVGNNVSHANNKTKRRFEPNLHHHRFWLESEKRFVRLRLTTKGMRIIDKLGIEKVVADLRAQGQKI</sequence>
<evidence type="ECO:0000255" key="1">
    <source>
        <dbReference type="HAMAP-Rule" id="MF_00373"/>
    </source>
</evidence>
<evidence type="ECO:0000305" key="2"/>
<feature type="chain" id="PRO_1000121566" description="Large ribosomal subunit protein bL28">
    <location>
        <begin position="1"/>
        <end position="78"/>
    </location>
</feature>
<comment type="similarity">
    <text evidence="1">Belongs to the bacterial ribosomal protein bL28 family.</text>
</comment>
<protein>
    <recommendedName>
        <fullName evidence="1">Large ribosomal subunit protein bL28</fullName>
    </recommendedName>
    <alternativeName>
        <fullName evidence="2">50S ribosomal protein L28</fullName>
    </alternativeName>
</protein>
<proteinExistence type="inferred from homology"/>
<keyword id="KW-0687">Ribonucleoprotein</keyword>
<keyword id="KW-0689">Ribosomal protein</keyword>
<accession>B7H0Q4</accession>
<reference key="1">
    <citation type="journal article" date="2008" name="J. Bacteriol.">
        <title>Comparative genome sequence analysis of multidrug-resistant Acinetobacter baumannii.</title>
        <authorList>
            <person name="Adams M.D."/>
            <person name="Goglin K."/>
            <person name="Molyneaux N."/>
            <person name="Hujer K.M."/>
            <person name="Lavender H."/>
            <person name="Jamison J.J."/>
            <person name="MacDonald I.J."/>
            <person name="Martin K.M."/>
            <person name="Russo T."/>
            <person name="Campagnari A.A."/>
            <person name="Hujer A.M."/>
            <person name="Bonomo R.A."/>
            <person name="Gill S.R."/>
        </authorList>
    </citation>
    <scope>NUCLEOTIDE SEQUENCE [LARGE SCALE GENOMIC DNA]</scope>
    <source>
        <strain>AB307-0294</strain>
    </source>
</reference>
<organism>
    <name type="scientific">Acinetobacter baumannii (strain AB307-0294)</name>
    <dbReference type="NCBI Taxonomy" id="557600"/>
    <lineage>
        <taxon>Bacteria</taxon>
        <taxon>Pseudomonadati</taxon>
        <taxon>Pseudomonadota</taxon>
        <taxon>Gammaproteobacteria</taxon>
        <taxon>Moraxellales</taxon>
        <taxon>Moraxellaceae</taxon>
        <taxon>Acinetobacter</taxon>
        <taxon>Acinetobacter calcoaceticus/baumannii complex</taxon>
    </lineage>
</organism>
<gene>
    <name evidence="1" type="primary">rpmB</name>
    <name type="ordered locus">ABBFA_003086</name>
</gene>